<organism>
    <name type="scientific">Bacillus anthracis (strain CDC 684 / NRRL 3495)</name>
    <dbReference type="NCBI Taxonomy" id="568206"/>
    <lineage>
        <taxon>Bacteria</taxon>
        <taxon>Bacillati</taxon>
        <taxon>Bacillota</taxon>
        <taxon>Bacilli</taxon>
        <taxon>Bacillales</taxon>
        <taxon>Bacillaceae</taxon>
        <taxon>Bacillus</taxon>
        <taxon>Bacillus cereus group</taxon>
    </lineage>
</organism>
<name>MOBA_BACAC</name>
<proteinExistence type="inferred from homology"/>
<keyword id="KW-0963">Cytoplasm</keyword>
<keyword id="KW-0342">GTP-binding</keyword>
<keyword id="KW-0460">Magnesium</keyword>
<keyword id="KW-0479">Metal-binding</keyword>
<keyword id="KW-0501">Molybdenum cofactor biosynthesis</keyword>
<keyword id="KW-0547">Nucleotide-binding</keyword>
<keyword id="KW-0808">Transferase</keyword>
<gene>
    <name evidence="1" type="primary">mobA</name>
    <name type="ordered locus">BAMEG_5048</name>
</gene>
<accession>C3LAZ5</accession>
<protein>
    <recommendedName>
        <fullName evidence="1">Probable molybdenum cofactor guanylyltransferase</fullName>
        <shortName evidence="1">MoCo guanylyltransferase</shortName>
        <ecNumber evidence="1">2.7.7.77</ecNumber>
    </recommendedName>
    <alternativeName>
        <fullName evidence="1">GTP:molybdopterin guanylyltransferase</fullName>
    </alternativeName>
    <alternativeName>
        <fullName evidence="1">Mo-MPT guanylyltransferase</fullName>
    </alternativeName>
    <alternativeName>
        <fullName evidence="1">Molybdopterin guanylyltransferase</fullName>
    </alternativeName>
    <alternativeName>
        <fullName evidence="1">Molybdopterin-guanine dinucleotide synthase</fullName>
        <shortName evidence="1">MGD synthase</shortName>
    </alternativeName>
</protein>
<evidence type="ECO:0000255" key="1">
    <source>
        <dbReference type="HAMAP-Rule" id="MF_00316"/>
    </source>
</evidence>
<reference key="1">
    <citation type="submission" date="2008-10" db="EMBL/GenBank/DDBJ databases">
        <title>Genome sequence of Bacillus anthracis str. CDC 684.</title>
        <authorList>
            <person name="Dodson R.J."/>
            <person name="Munk A.C."/>
            <person name="Brettin T."/>
            <person name="Bruce D."/>
            <person name="Detter C."/>
            <person name="Tapia R."/>
            <person name="Han C."/>
            <person name="Sutton G."/>
            <person name="Sims D."/>
        </authorList>
    </citation>
    <scope>NUCLEOTIDE SEQUENCE [LARGE SCALE GENOMIC DNA]</scope>
    <source>
        <strain>CDC 684 / NRRL 3495</strain>
    </source>
</reference>
<dbReference type="EC" id="2.7.7.77" evidence="1"/>
<dbReference type="EMBL" id="CP001215">
    <property type="protein sequence ID" value="ACP13523.1"/>
    <property type="molecule type" value="Genomic_DNA"/>
</dbReference>
<dbReference type="RefSeq" id="WP_000049605.1">
    <property type="nucleotide sequence ID" value="NC_012581.1"/>
</dbReference>
<dbReference type="SMR" id="C3LAZ5"/>
<dbReference type="KEGG" id="bah:BAMEG_5048"/>
<dbReference type="HOGENOM" id="CLU_055597_2_0_9"/>
<dbReference type="GO" id="GO:0005737">
    <property type="term" value="C:cytoplasm"/>
    <property type="evidence" value="ECO:0007669"/>
    <property type="project" value="UniProtKB-SubCell"/>
</dbReference>
<dbReference type="GO" id="GO:0005525">
    <property type="term" value="F:GTP binding"/>
    <property type="evidence" value="ECO:0007669"/>
    <property type="project" value="UniProtKB-UniRule"/>
</dbReference>
<dbReference type="GO" id="GO:0046872">
    <property type="term" value="F:metal ion binding"/>
    <property type="evidence" value="ECO:0007669"/>
    <property type="project" value="UniProtKB-KW"/>
</dbReference>
<dbReference type="GO" id="GO:0061603">
    <property type="term" value="F:molybdenum cofactor guanylyltransferase activity"/>
    <property type="evidence" value="ECO:0007669"/>
    <property type="project" value="UniProtKB-EC"/>
</dbReference>
<dbReference type="GO" id="GO:0006777">
    <property type="term" value="P:Mo-molybdopterin cofactor biosynthetic process"/>
    <property type="evidence" value="ECO:0007669"/>
    <property type="project" value="UniProtKB-KW"/>
</dbReference>
<dbReference type="CDD" id="cd02503">
    <property type="entry name" value="MobA"/>
    <property type="match status" value="1"/>
</dbReference>
<dbReference type="FunFam" id="3.90.550.10:FF:000121">
    <property type="entry name" value="Probable molybdenum cofactor guanylyltransferase"/>
    <property type="match status" value="1"/>
</dbReference>
<dbReference type="Gene3D" id="3.90.550.10">
    <property type="entry name" value="Spore Coat Polysaccharide Biosynthesis Protein SpsA, Chain A"/>
    <property type="match status" value="1"/>
</dbReference>
<dbReference type="HAMAP" id="MF_00316">
    <property type="entry name" value="MobA"/>
    <property type="match status" value="1"/>
</dbReference>
<dbReference type="InterPro" id="IPR025877">
    <property type="entry name" value="MobA-like_NTP_Trfase"/>
</dbReference>
<dbReference type="InterPro" id="IPR013482">
    <property type="entry name" value="Molybde_CF_guanTrfase"/>
</dbReference>
<dbReference type="InterPro" id="IPR029044">
    <property type="entry name" value="Nucleotide-diphossugar_trans"/>
</dbReference>
<dbReference type="PANTHER" id="PTHR19136">
    <property type="entry name" value="MOLYBDENUM COFACTOR GUANYLYLTRANSFERASE"/>
    <property type="match status" value="1"/>
</dbReference>
<dbReference type="PANTHER" id="PTHR19136:SF81">
    <property type="entry name" value="MOLYBDENUM COFACTOR GUANYLYLTRANSFERASE"/>
    <property type="match status" value="1"/>
</dbReference>
<dbReference type="Pfam" id="PF12804">
    <property type="entry name" value="NTP_transf_3"/>
    <property type="match status" value="1"/>
</dbReference>
<dbReference type="SUPFAM" id="SSF53448">
    <property type="entry name" value="Nucleotide-diphospho-sugar transferases"/>
    <property type="match status" value="1"/>
</dbReference>
<sequence>MSKYAGIVLAGGMSSRFGEPKALASWQGSTFIEHILKVMTSTLQEVVVISHSDIKERVEKLVQVPVIEDIPHYKGNGPLAGIVSGMEYIEADWYAIMPCDAPNVSHEWFTILLEQTSNEYDAVVPIINGRKQPLLAAYHNRVKEKIYALLQDEKRSMGQLLSQCNVKYVSGEDVQANADWFINVNTKEEYVQAQKDLSNK</sequence>
<comment type="function">
    <text evidence="1">Transfers a GMP moiety from GTP to Mo-molybdopterin (Mo-MPT) cofactor (Moco or molybdenum cofactor) to form Mo-molybdopterin guanine dinucleotide (Mo-MGD) cofactor.</text>
</comment>
<comment type="catalytic activity">
    <reaction evidence="1">
        <text>Mo-molybdopterin + GTP + H(+) = Mo-molybdopterin guanine dinucleotide + diphosphate</text>
        <dbReference type="Rhea" id="RHEA:34243"/>
        <dbReference type="ChEBI" id="CHEBI:15378"/>
        <dbReference type="ChEBI" id="CHEBI:33019"/>
        <dbReference type="ChEBI" id="CHEBI:37565"/>
        <dbReference type="ChEBI" id="CHEBI:71302"/>
        <dbReference type="ChEBI" id="CHEBI:71310"/>
        <dbReference type="EC" id="2.7.7.77"/>
    </reaction>
</comment>
<comment type="cofactor">
    <cofactor evidence="1">
        <name>Mg(2+)</name>
        <dbReference type="ChEBI" id="CHEBI:18420"/>
    </cofactor>
</comment>
<comment type="subcellular location">
    <subcellularLocation>
        <location evidence="1">Cytoplasm</location>
    </subcellularLocation>
</comment>
<comment type="domain">
    <text evidence="1">The N-terminal domain determines nucleotide recognition and specific binding, while the C-terminal domain determines the specific binding to the target protein.</text>
</comment>
<comment type="similarity">
    <text evidence="1">Belongs to the MobA family.</text>
</comment>
<feature type="chain" id="PRO_1000132953" description="Probable molybdenum cofactor guanylyltransferase">
    <location>
        <begin position="1"/>
        <end position="200"/>
    </location>
</feature>
<feature type="binding site" evidence="1">
    <location>
        <begin position="9"/>
        <end position="11"/>
    </location>
    <ligand>
        <name>GTP</name>
        <dbReference type="ChEBI" id="CHEBI:37565"/>
    </ligand>
</feature>
<feature type="binding site" evidence="1">
    <location>
        <position position="21"/>
    </location>
    <ligand>
        <name>GTP</name>
        <dbReference type="ChEBI" id="CHEBI:37565"/>
    </ligand>
</feature>
<feature type="binding site" evidence="1">
    <location>
        <position position="69"/>
    </location>
    <ligand>
        <name>GTP</name>
        <dbReference type="ChEBI" id="CHEBI:37565"/>
    </ligand>
</feature>
<feature type="binding site" evidence="1">
    <location>
        <position position="100"/>
    </location>
    <ligand>
        <name>GTP</name>
        <dbReference type="ChEBI" id="CHEBI:37565"/>
    </ligand>
</feature>
<feature type="binding site" evidence="1">
    <location>
        <position position="100"/>
    </location>
    <ligand>
        <name>Mg(2+)</name>
        <dbReference type="ChEBI" id="CHEBI:18420"/>
    </ligand>
</feature>